<accession>A4Q9F6</accession>
<accession>Q8C0W9</accession>
<organism>
    <name type="scientific">Mus musculus</name>
    <name type="common">Mouse</name>
    <dbReference type="NCBI Taxonomy" id="10090"/>
    <lineage>
        <taxon>Eukaryota</taxon>
        <taxon>Metazoa</taxon>
        <taxon>Chordata</taxon>
        <taxon>Craniata</taxon>
        <taxon>Vertebrata</taxon>
        <taxon>Euteleostomi</taxon>
        <taxon>Mammalia</taxon>
        <taxon>Eutheria</taxon>
        <taxon>Euarchontoglires</taxon>
        <taxon>Glires</taxon>
        <taxon>Rodentia</taxon>
        <taxon>Myomorpha</taxon>
        <taxon>Muroidea</taxon>
        <taxon>Muridae</taxon>
        <taxon>Murinae</taxon>
        <taxon>Mus</taxon>
        <taxon>Mus</taxon>
    </lineage>
</organism>
<sequence length="804" mass="93463">MEPNNCKTSESEEDDIEEEESEEECVREESTTPNSTQQALRKADYKEFENGVALSVVAKKIPKKILSATDTDDLEVGRRRRKRKRRPLAINLTNCKYESVRRAAQMCGLKEVGEDEEWTVYWTDCSVSLERVMDMKRFQKINHFPGMTEICRKDLLARNLNRMQKLYPTEYNIFPRTWCLPADYGDFQAYGRQRKTRTYICKPDSGCQGRGIFITRTPKEIKPGEHMICQQYITKPFLIDGFKFDMRIYVLITSCDPLRIFMYEEGLARFATMPYVEPSHNNLEEVCMHLTNYAINKHNENFVRDDAVGSKRKLSTLNAWLREHSHDPQELWGDIEDIIIKTIISAHSVLRHNYRTCFPQYLCGGTCACFEILGFDILLDHKLKPWLLEVNHSPSFTTDSRLDREVKDALLCDAMNLVNLRGCDKKKVIEEDKRRVKERLFPCHQQPRETRREQFELSQAAMHDQERYEDSHLGGYRRIYPGPDSEKYAPFFKHNGSLFQETAASKAREECARQQLEEIRLKQEQQENPGTKKRKENKEQNQGESAGEKSRSRTATRVLATSLAYRNRNREKELLPVQLDTTQPQDIVEEEELERMKLLLQRENLIRSLGIVEQLTRMLYPSHRSHRKLHEYRPRFHQDGLSSQELQPVNLVPLVLLRGAASEQIPPHFLQPLRPHELIPRILGPLSSINPAIAQHSRYHLQPKNFNWIGDSAATGPCSLSMKKSGRHYISSSRVRLTSRKRRKAQHSTKTANGLQSLLIERLPTSSRLKSSGQDLCLQKAKNTETPRVLQHSKILWGSVKTKR</sequence>
<name>TTL13_MOUSE</name>
<comment type="function">
    <text evidence="7">Polyglutamylase which modifies tubulin, generating polyglutamate side chains of variable lengths on the gamma-carboxyl group of specific glutamate residues within the C-terminal tail of tubulin (PubMed:17499049). Mediates ATP-dependent polyglutamate side-chain elongation of the polyglutamylation reaction but not the initiation step (PubMed:17499049). Preferentially modifies the alpha-tubulin tail over a beta-tail (PubMed:17499049).</text>
</comment>
<comment type="catalytic activity">
    <reaction evidence="7">
        <text>(L-glutamyl)(n)-gamma-L-glutamyl-L-glutamyl-[protein] + L-glutamate + ATP = (L-glutamyl)(n+1)-gamma-L-glutamyl-L-glutamyl-[protein] + ADP + phosphate + H(+)</text>
        <dbReference type="Rhea" id="RHEA:60148"/>
        <dbReference type="Rhea" id="RHEA-COMP:15519"/>
        <dbReference type="Rhea" id="RHEA-COMP:15675"/>
        <dbReference type="ChEBI" id="CHEBI:15378"/>
        <dbReference type="ChEBI" id="CHEBI:29985"/>
        <dbReference type="ChEBI" id="CHEBI:30616"/>
        <dbReference type="ChEBI" id="CHEBI:43474"/>
        <dbReference type="ChEBI" id="CHEBI:143623"/>
        <dbReference type="ChEBI" id="CHEBI:456216"/>
    </reaction>
    <physiologicalReaction direction="left-to-right" evidence="11">
        <dbReference type="Rhea" id="RHEA:60149"/>
    </physiologicalReaction>
</comment>
<comment type="cofactor">
    <cofactor evidence="1">
        <name>Mg(2+)</name>
        <dbReference type="ChEBI" id="CHEBI:18420"/>
    </cofactor>
</comment>
<comment type="tissue specificity">
    <text evidence="7 8">Highly expressed in heart and testis (PubMed:17499049). Expressed in brain, kidney, liver, lung, muscle and trachea (PubMed:17499049). In the brain, expressed in ependymal cilia, cortex, corpus callosum and striatum (PubMed:23897886).</text>
</comment>
<comment type="domain">
    <text evidence="2 3">The flexible c-MTBD (cationic microtubule binding domain) region mediates binding to microtubules. It is positively charged and becomes ordered when bound to microtubules: it interacts with a negatively charged patch on tubulin. The presence of positive charges in the c-MTBD region is essential for proper binding.</text>
</comment>
<comment type="domain">
    <text evidence="1">Gln-208 is the main determinant for regioselectivity, which segregates between initiases and elongases in all tubulin--tyrosine ligase family. A glutamine residue at this position is found in elongases TTLL6, TTLL9, TTLL11, TTLL13, TTLL10 and favors glutamate-chain elongation, whereas an arginine residue is found in initiases TTLL2, TTLL4, TTLL5, TTLL3, TTLL8 and favors initiation.</text>
</comment>
<comment type="similarity">
    <text evidence="4">Belongs to the tubulin--tyrosine ligase family.</text>
</comment>
<comment type="sequence caution" evidence="10">
    <conflict type="frameshift">
        <sequence resource="EMBL-CDS" id="BAC26514"/>
    </conflict>
</comment>
<protein>
    <recommendedName>
        <fullName evidence="9">Tubulin polyglutamylase TTLL13</fullName>
        <ecNumber evidence="7">6.3.2.-</ecNumber>
    </recommendedName>
    <alternativeName>
        <fullName>Tubulin--tyrosine ligase-like protein 13</fullName>
    </alternativeName>
</protein>
<proteinExistence type="evidence at protein level"/>
<keyword id="KW-0067">ATP-binding</keyword>
<keyword id="KW-0175">Coiled coil</keyword>
<keyword id="KW-0436">Ligase</keyword>
<keyword id="KW-0460">Magnesium</keyword>
<keyword id="KW-0479">Metal-binding</keyword>
<keyword id="KW-0493">Microtubule</keyword>
<keyword id="KW-0547">Nucleotide-binding</keyword>
<keyword id="KW-1185">Reference proteome</keyword>
<gene>
    <name evidence="13 14" type="primary">Ttll13</name>
</gene>
<evidence type="ECO:0000250" key="1">
    <source>
        <dbReference type="UniProtKB" id="A4Q9E8"/>
    </source>
</evidence>
<evidence type="ECO:0000250" key="2">
    <source>
        <dbReference type="UniProtKB" id="A6NNM8"/>
    </source>
</evidence>
<evidence type="ECO:0000250" key="3">
    <source>
        <dbReference type="UniProtKB" id="Q6ZT98"/>
    </source>
</evidence>
<evidence type="ECO:0000255" key="4"/>
<evidence type="ECO:0000255" key="5">
    <source>
        <dbReference type="PROSITE-ProRule" id="PRU00568"/>
    </source>
</evidence>
<evidence type="ECO:0000256" key="6">
    <source>
        <dbReference type="SAM" id="MobiDB-lite"/>
    </source>
</evidence>
<evidence type="ECO:0000269" key="7">
    <source>
    </source>
</evidence>
<evidence type="ECO:0000269" key="8">
    <source>
    </source>
</evidence>
<evidence type="ECO:0000303" key="9">
    <source>
    </source>
</evidence>
<evidence type="ECO:0000305" key="10"/>
<evidence type="ECO:0000305" key="11">
    <source>
    </source>
</evidence>
<evidence type="ECO:0000312" key="12">
    <source>
        <dbReference type="EMBL" id="BAC26514.1"/>
    </source>
</evidence>
<evidence type="ECO:0000312" key="13">
    <source>
        <dbReference type="EMBL" id="CAM84334.1"/>
    </source>
</evidence>
<evidence type="ECO:0000312" key="14">
    <source>
        <dbReference type="MGI" id="MGI:1920845"/>
    </source>
</evidence>
<reference key="1">
    <citation type="journal article" date="2007" name="Mol. Cell">
        <title>A targeted multienzyme mechanism for selective microtubule polyglutamylation.</title>
        <authorList>
            <person name="van Dijk J."/>
            <person name="Rogowski K."/>
            <person name="Miro J."/>
            <person name="Lacroix B."/>
            <person name="Edde B."/>
            <person name="Janke C."/>
        </authorList>
    </citation>
    <scope>NUCLEOTIDE SEQUENCE [MRNA]</scope>
    <scope>FUNCTION</scope>
    <scope>CATALYTIC ACTIVITY</scope>
    <scope>TISSUE SPECIFICITY</scope>
    <source>
        <strain evidence="13">C57BL/6J</strain>
        <tissue evidence="13">Testis</tissue>
    </source>
</reference>
<reference key="2">
    <citation type="journal article" date="2005" name="Science">
        <title>The transcriptional landscape of the mammalian genome.</title>
        <authorList>
            <person name="Carninci P."/>
            <person name="Kasukawa T."/>
            <person name="Katayama S."/>
            <person name="Gough J."/>
            <person name="Frith M.C."/>
            <person name="Maeda N."/>
            <person name="Oyama R."/>
            <person name="Ravasi T."/>
            <person name="Lenhard B."/>
            <person name="Wells C."/>
            <person name="Kodzius R."/>
            <person name="Shimokawa K."/>
            <person name="Bajic V.B."/>
            <person name="Brenner S.E."/>
            <person name="Batalov S."/>
            <person name="Forrest A.R."/>
            <person name="Zavolan M."/>
            <person name="Davis M.J."/>
            <person name="Wilming L.G."/>
            <person name="Aidinis V."/>
            <person name="Allen J.E."/>
            <person name="Ambesi-Impiombato A."/>
            <person name="Apweiler R."/>
            <person name="Aturaliya R.N."/>
            <person name="Bailey T.L."/>
            <person name="Bansal M."/>
            <person name="Baxter L."/>
            <person name="Beisel K.W."/>
            <person name="Bersano T."/>
            <person name="Bono H."/>
            <person name="Chalk A.M."/>
            <person name="Chiu K.P."/>
            <person name="Choudhary V."/>
            <person name="Christoffels A."/>
            <person name="Clutterbuck D.R."/>
            <person name="Crowe M.L."/>
            <person name="Dalla E."/>
            <person name="Dalrymple B.P."/>
            <person name="de Bono B."/>
            <person name="Della Gatta G."/>
            <person name="di Bernardo D."/>
            <person name="Down T."/>
            <person name="Engstrom P."/>
            <person name="Fagiolini M."/>
            <person name="Faulkner G."/>
            <person name="Fletcher C.F."/>
            <person name="Fukushima T."/>
            <person name="Furuno M."/>
            <person name="Futaki S."/>
            <person name="Gariboldi M."/>
            <person name="Georgii-Hemming P."/>
            <person name="Gingeras T.R."/>
            <person name="Gojobori T."/>
            <person name="Green R.E."/>
            <person name="Gustincich S."/>
            <person name="Harbers M."/>
            <person name="Hayashi Y."/>
            <person name="Hensch T.K."/>
            <person name="Hirokawa N."/>
            <person name="Hill D."/>
            <person name="Huminiecki L."/>
            <person name="Iacono M."/>
            <person name="Ikeo K."/>
            <person name="Iwama A."/>
            <person name="Ishikawa T."/>
            <person name="Jakt M."/>
            <person name="Kanapin A."/>
            <person name="Katoh M."/>
            <person name="Kawasawa Y."/>
            <person name="Kelso J."/>
            <person name="Kitamura H."/>
            <person name="Kitano H."/>
            <person name="Kollias G."/>
            <person name="Krishnan S.P."/>
            <person name="Kruger A."/>
            <person name="Kummerfeld S.K."/>
            <person name="Kurochkin I.V."/>
            <person name="Lareau L.F."/>
            <person name="Lazarevic D."/>
            <person name="Lipovich L."/>
            <person name="Liu J."/>
            <person name="Liuni S."/>
            <person name="McWilliam S."/>
            <person name="Madan Babu M."/>
            <person name="Madera M."/>
            <person name="Marchionni L."/>
            <person name="Matsuda H."/>
            <person name="Matsuzawa S."/>
            <person name="Miki H."/>
            <person name="Mignone F."/>
            <person name="Miyake S."/>
            <person name="Morris K."/>
            <person name="Mottagui-Tabar S."/>
            <person name="Mulder N."/>
            <person name="Nakano N."/>
            <person name="Nakauchi H."/>
            <person name="Ng P."/>
            <person name="Nilsson R."/>
            <person name="Nishiguchi S."/>
            <person name="Nishikawa S."/>
            <person name="Nori F."/>
            <person name="Ohara O."/>
            <person name="Okazaki Y."/>
            <person name="Orlando V."/>
            <person name="Pang K.C."/>
            <person name="Pavan W.J."/>
            <person name="Pavesi G."/>
            <person name="Pesole G."/>
            <person name="Petrovsky N."/>
            <person name="Piazza S."/>
            <person name="Reed J."/>
            <person name="Reid J.F."/>
            <person name="Ring B.Z."/>
            <person name="Ringwald M."/>
            <person name="Rost B."/>
            <person name="Ruan Y."/>
            <person name="Salzberg S.L."/>
            <person name="Sandelin A."/>
            <person name="Schneider C."/>
            <person name="Schoenbach C."/>
            <person name="Sekiguchi K."/>
            <person name="Semple C.A."/>
            <person name="Seno S."/>
            <person name="Sessa L."/>
            <person name="Sheng Y."/>
            <person name="Shibata Y."/>
            <person name="Shimada H."/>
            <person name="Shimada K."/>
            <person name="Silva D."/>
            <person name="Sinclair B."/>
            <person name="Sperling S."/>
            <person name="Stupka E."/>
            <person name="Sugiura K."/>
            <person name="Sultana R."/>
            <person name="Takenaka Y."/>
            <person name="Taki K."/>
            <person name="Tammoja K."/>
            <person name="Tan S.L."/>
            <person name="Tang S."/>
            <person name="Taylor M.S."/>
            <person name="Tegner J."/>
            <person name="Teichmann S.A."/>
            <person name="Ueda H.R."/>
            <person name="van Nimwegen E."/>
            <person name="Verardo R."/>
            <person name="Wei C.L."/>
            <person name="Yagi K."/>
            <person name="Yamanishi H."/>
            <person name="Zabarovsky E."/>
            <person name="Zhu S."/>
            <person name="Zimmer A."/>
            <person name="Hide W."/>
            <person name="Bult C."/>
            <person name="Grimmond S.M."/>
            <person name="Teasdale R.D."/>
            <person name="Liu E.T."/>
            <person name="Brusic V."/>
            <person name="Quackenbush J."/>
            <person name="Wahlestedt C."/>
            <person name="Mattick J.S."/>
            <person name="Hume D.A."/>
            <person name="Kai C."/>
            <person name="Sasaki D."/>
            <person name="Tomaru Y."/>
            <person name="Fukuda S."/>
            <person name="Kanamori-Katayama M."/>
            <person name="Suzuki M."/>
            <person name="Aoki J."/>
            <person name="Arakawa T."/>
            <person name="Iida J."/>
            <person name="Imamura K."/>
            <person name="Itoh M."/>
            <person name="Kato T."/>
            <person name="Kawaji H."/>
            <person name="Kawagashira N."/>
            <person name="Kawashima T."/>
            <person name="Kojima M."/>
            <person name="Kondo S."/>
            <person name="Konno H."/>
            <person name="Nakano K."/>
            <person name="Ninomiya N."/>
            <person name="Nishio T."/>
            <person name="Okada M."/>
            <person name="Plessy C."/>
            <person name="Shibata K."/>
            <person name="Shiraki T."/>
            <person name="Suzuki S."/>
            <person name="Tagami M."/>
            <person name="Waki K."/>
            <person name="Watahiki A."/>
            <person name="Okamura-Oho Y."/>
            <person name="Suzuki H."/>
            <person name="Kawai J."/>
            <person name="Hayashizaki Y."/>
        </authorList>
    </citation>
    <scope>NUCLEOTIDE SEQUENCE [LARGE SCALE MRNA]</scope>
    <source>
        <strain evidence="12">C57BL/6J</strain>
        <tissue evidence="12">Testis</tissue>
    </source>
</reference>
<reference key="3">
    <citation type="journal article" date="2013" name="J. Cell Biol.">
        <title>Tubulin glycylases and glutamylases have distinct functions in stabilization and motility of ependymal cilia.</title>
        <authorList>
            <person name="Bosch Grau M."/>
            <person name="Gonzalez Curto G."/>
            <person name="Rocha C."/>
            <person name="Magiera M.M."/>
            <person name="Marques Sousa P."/>
            <person name="Giordano T."/>
            <person name="Spassky N."/>
            <person name="Janke C."/>
        </authorList>
    </citation>
    <scope>TISSUE SPECIFICITY</scope>
</reference>
<dbReference type="EC" id="6.3.2.-" evidence="7"/>
<dbReference type="EMBL" id="AM690757">
    <property type="protein sequence ID" value="CAM84334.1"/>
    <property type="molecule type" value="mRNA"/>
</dbReference>
<dbReference type="EMBL" id="AK029565">
    <property type="protein sequence ID" value="BAC26514.1"/>
    <property type="status" value="ALT_FRAME"/>
    <property type="molecule type" value="mRNA"/>
</dbReference>
<dbReference type="CCDS" id="CCDS39996.1"/>
<dbReference type="RefSeq" id="NP_808433.2">
    <property type="nucleotide sequence ID" value="NM_177765.4"/>
</dbReference>
<dbReference type="SMR" id="A4Q9F6"/>
<dbReference type="BioGRID" id="234735">
    <property type="interactions" value="1"/>
</dbReference>
<dbReference type="FunCoup" id="A4Q9F6">
    <property type="interactions" value="70"/>
</dbReference>
<dbReference type="STRING" id="10090.ENSMUSP00000062795"/>
<dbReference type="iPTMnet" id="A4Q9F6"/>
<dbReference type="PhosphoSitePlus" id="A4Q9F6"/>
<dbReference type="PaxDb" id="10090-ENSMUSP00000062795"/>
<dbReference type="ProteomicsDB" id="297681"/>
<dbReference type="DNASU" id="269954"/>
<dbReference type="Ensembl" id="ENSMUST00000058266.9">
    <property type="protein sequence ID" value="ENSMUSP00000062795.7"/>
    <property type="gene ID" value="ENSMUSG00000045467.14"/>
</dbReference>
<dbReference type="GeneID" id="269954"/>
<dbReference type="KEGG" id="mmu:269954"/>
<dbReference type="UCSC" id="uc009hzv.1">
    <property type="organism name" value="mouse"/>
</dbReference>
<dbReference type="AGR" id="MGI:1920845"/>
<dbReference type="CTD" id="440307"/>
<dbReference type="MGI" id="MGI:1920845">
    <property type="gene designation" value="Ttll13"/>
</dbReference>
<dbReference type="VEuPathDB" id="HostDB:ENSMUSG00000045467"/>
<dbReference type="eggNOG" id="KOG2158">
    <property type="taxonomic scope" value="Eukaryota"/>
</dbReference>
<dbReference type="GeneTree" id="ENSGT00940000161367"/>
<dbReference type="HOGENOM" id="CLU_010131_7_3_1"/>
<dbReference type="InParanoid" id="A4Q9F6"/>
<dbReference type="OMA" id="SICILNC"/>
<dbReference type="OrthoDB" id="202825at2759"/>
<dbReference type="PhylomeDB" id="A4Q9F6"/>
<dbReference type="TreeFam" id="TF313087"/>
<dbReference type="BRENDA" id="6.3.2.B3">
    <property type="organism ID" value="3474"/>
</dbReference>
<dbReference type="Reactome" id="R-MMU-8955332">
    <property type="pathway name" value="Carboxyterminal post-translational modifications of tubulin"/>
</dbReference>
<dbReference type="BioGRID-ORCS" id="269954">
    <property type="hits" value="1 hit in 76 CRISPR screens"/>
</dbReference>
<dbReference type="PRO" id="PR:A4Q9F6"/>
<dbReference type="Proteomes" id="UP000000589">
    <property type="component" value="Chromosome 7"/>
</dbReference>
<dbReference type="RNAct" id="A4Q9F6">
    <property type="molecule type" value="protein"/>
</dbReference>
<dbReference type="Bgee" id="ENSMUSG00000045467">
    <property type="expression patterns" value="Expressed in spermatid and 57 other cell types or tissues"/>
</dbReference>
<dbReference type="ExpressionAtlas" id="A4Q9F6">
    <property type="expression patterns" value="baseline and differential"/>
</dbReference>
<dbReference type="GO" id="GO:0005874">
    <property type="term" value="C:microtubule"/>
    <property type="evidence" value="ECO:0007669"/>
    <property type="project" value="UniProtKB-KW"/>
</dbReference>
<dbReference type="GO" id="GO:0005524">
    <property type="term" value="F:ATP binding"/>
    <property type="evidence" value="ECO:0007669"/>
    <property type="project" value="UniProtKB-KW"/>
</dbReference>
<dbReference type="GO" id="GO:0046872">
    <property type="term" value="F:metal ion binding"/>
    <property type="evidence" value="ECO:0007669"/>
    <property type="project" value="UniProtKB-KW"/>
</dbReference>
<dbReference type="GO" id="GO:0106438">
    <property type="term" value="F:protein-glutamic acid ligase activity, elongating"/>
    <property type="evidence" value="ECO:0007669"/>
    <property type="project" value="RHEA"/>
</dbReference>
<dbReference type="GO" id="GO:0070740">
    <property type="term" value="F:tubulin-glutamic acid ligase activity"/>
    <property type="evidence" value="ECO:0000314"/>
    <property type="project" value="UniProtKB"/>
</dbReference>
<dbReference type="GO" id="GO:0036211">
    <property type="term" value="P:protein modification process"/>
    <property type="evidence" value="ECO:0007669"/>
    <property type="project" value="InterPro"/>
</dbReference>
<dbReference type="FunFam" id="3.30.470.20:FF:000009">
    <property type="entry name" value="tubulin polyglutamylase TTLL5 isoform X1"/>
    <property type="match status" value="1"/>
</dbReference>
<dbReference type="Gene3D" id="3.30.470.20">
    <property type="entry name" value="ATP-grasp fold, B domain"/>
    <property type="match status" value="1"/>
</dbReference>
<dbReference type="InterPro" id="IPR004344">
    <property type="entry name" value="TTL/TTLL_fam"/>
</dbReference>
<dbReference type="PANTHER" id="PTHR12241">
    <property type="entry name" value="TUBULIN POLYGLUTAMYLASE"/>
    <property type="match status" value="1"/>
</dbReference>
<dbReference type="PANTHER" id="PTHR12241:SF91">
    <property type="entry name" value="TUBULIN POLYGLUTAMYLASE TTLL13"/>
    <property type="match status" value="1"/>
</dbReference>
<dbReference type="Pfam" id="PF03133">
    <property type="entry name" value="TTL"/>
    <property type="match status" value="1"/>
</dbReference>
<dbReference type="SUPFAM" id="SSF56059">
    <property type="entry name" value="Glutathione synthetase ATP-binding domain-like"/>
    <property type="match status" value="1"/>
</dbReference>
<dbReference type="PROSITE" id="PS51221">
    <property type="entry name" value="TTL"/>
    <property type="match status" value="1"/>
</dbReference>
<feature type="chain" id="PRO_0000326168" description="Tubulin polyglutamylase TTLL13">
    <location>
        <begin position="1"/>
        <end position="804"/>
    </location>
</feature>
<feature type="domain" description="TTL" evidence="5">
    <location>
        <begin position="85"/>
        <end position="430"/>
    </location>
</feature>
<feature type="region of interest" description="Disordered" evidence="6">
    <location>
        <begin position="1"/>
        <end position="41"/>
    </location>
</feature>
<feature type="region of interest" description="c-MTBD region" evidence="2">
    <location>
        <begin position="401"/>
        <end position="482"/>
    </location>
</feature>
<feature type="region of interest" description="Disordered" evidence="6">
    <location>
        <begin position="519"/>
        <end position="556"/>
    </location>
</feature>
<feature type="coiled-coil region" evidence="4">
    <location>
        <begin position="4"/>
        <end position="30"/>
    </location>
</feature>
<feature type="coiled-coil region" evidence="4">
    <location>
        <begin position="504"/>
        <end position="541"/>
    </location>
</feature>
<feature type="coiled-coil region" evidence="4">
    <location>
        <begin position="585"/>
        <end position="609"/>
    </location>
</feature>
<feature type="compositionally biased region" description="Acidic residues" evidence="6">
    <location>
        <begin position="11"/>
        <end position="26"/>
    </location>
</feature>
<feature type="compositionally biased region" description="Basic and acidic residues" evidence="6">
    <location>
        <begin position="536"/>
        <end position="551"/>
    </location>
</feature>
<feature type="binding site" evidence="1">
    <location>
        <position position="202"/>
    </location>
    <ligand>
        <name>ATP</name>
        <dbReference type="ChEBI" id="CHEBI:30616"/>
    </ligand>
</feature>
<feature type="binding site" evidence="1">
    <location>
        <begin position="208"/>
        <end position="209"/>
    </location>
    <ligand>
        <name>ATP</name>
        <dbReference type="ChEBI" id="CHEBI:30616"/>
    </ligand>
</feature>
<feature type="binding site" evidence="1">
    <location>
        <position position="208"/>
    </location>
    <ligand>
        <name>a protein</name>
        <dbReference type="ChEBI" id="CHEBI:16541"/>
    </ligand>
    <ligandPart>
        <name>L-glutamate residue</name>
        <dbReference type="ChEBI" id="CHEBI:29973"/>
        <note>L-glutamate acceptor residue in protein target</note>
    </ligandPart>
</feature>
<feature type="binding site" evidence="1">
    <location>
        <begin position="230"/>
        <end position="233"/>
    </location>
    <ligand>
        <name>ATP</name>
        <dbReference type="ChEBI" id="CHEBI:30616"/>
    </ligand>
</feature>
<feature type="binding site" evidence="1">
    <location>
        <begin position="243"/>
        <end position="245"/>
    </location>
    <ligand>
        <name>ATP</name>
        <dbReference type="ChEBI" id="CHEBI:30616"/>
    </ligand>
</feature>
<feature type="binding site" evidence="1">
    <location>
        <position position="269"/>
    </location>
    <ligand>
        <name>L-glutamate</name>
        <dbReference type="ChEBI" id="CHEBI:29985"/>
    </ligand>
</feature>
<feature type="binding site" evidence="1">
    <location>
        <begin position="291"/>
        <end position="292"/>
    </location>
    <ligand>
        <name>ATP</name>
        <dbReference type="ChEBI" id="CHEBI:30616"/>
    </ligand>
</feature>
<feature type="binding site" evidence="1">
    <location>
        <position position="293"/>
    </location>
    <ligand>
        <name>L-glutamate</name>
        <dbReference type="ChEBI" id="CHEBI:29985"/>
    </ligand>
</feature>
<feature type="binding site" evidence="1">
    <location>
        <position position="311"/>
    </location>
    <ligand>
        <name>L-glutamate</name>
        <dbReference type="ChEBI" id="CHEBI:29985"/>
    </ligand>
</feature>
<feature type="binding site" evidence="1">
    <location>
        <position position="376"/>
    </location>
    <ligand>
        <name>Mg(2+)</name>
        <dbReference type="ChEBI" id="CHEBI:18420"/>
        <label>1</label>
    </ligand>
</feature>
<feature type="binding site" evidence="1">
    <location>
        <position position="389"/>
    </location>
    <ligand>
        <name>Mg(2+)</name>
        <dbReference type="ChEBI" id="CHEBI:18420"/>
        <label>1</label>
    </ligand>
</feature>
<feature type="binding site" evidence="1">
    <location>
        <position position="389"/>
    </location>
    <ligand>
        <name>Mg(2+)</name>
        <dbReference type="ChEBI" id="CHEBI:18420"/>
        <label>2</label>
    </ligand>
</feature>
<feature type="binding site" evidence="1">
    <location>
        <position position="391"/>
    </location>
    <ligand>
        <name>Mg(2+)</name>
        <dbReference type="ChEBI" id="CHEBI:18420"/>
        <label>2</label>
    </ligand>
</feature>
<feature type="binding site" evidence="1">
    <location>
        <position position="392"/>
    </location>
    <ligand>
        <name>a protein</name>
        <dbReference type="ChEBI" id="CHEBI:16541"/>
    </ligand>
    <ligandPart>
        <name>L-glutamate residue</name>
        <dbReference type="ChEBI" id="CHEBI:29973"/>
        <note>L-glutamate acceptor residue in protein target</note>
    </ligandPart>
</feature>
<feature type="binding site" evidence="1">
    <location>
        <position position="407"/>
    </location>
    <ligand>
        <name>L-glutamate</name>
        <dbReference type="ChEBI" id="CHEBI:29985"/>
    </ligand>
</feature>
<feature type="site" description="Essential for specifying alpha-elongation versus initiation step of the polyglutamylase activity" evidence="1">
    <location>
        <position position="208"/>
    </location>
</feature>